<dbReference type="EC" id="2.7.1.6" evidence="1"/>
<dbReference type="EMBL" id="AL939115">
    <property type="protein sequence ID" value="CAB95929.1"/>
    <property type="molecule type" value="Genomic_DNA"/>
</dbReference>
<dbReference type="RefSeq" id="NP_627353.1">
    <property type="nucleotide sequence ID" value="NC_003888.3"/>
</dbReference>
<dbReference type="RefSeq" id="WP_011028786.1">
    <property type="nucleotide sequence ID" value="NZ_VNID01000013.1"/>
</dbReference>
<dbReference type="SMR" id="Q9K3S8"/>
<dbReference type="FunCoup" id="Q9K3S8">
    <property type="interactions" value="247"/>
</dbReference>
<dbReference type="STRING" id="100226.gene:17760753"/>
<dbReference type="PaxDb" id="100226-SCO3136"/>
<dbReference type="KEGG" id="sco:SCO3136"/>
<dbReference type="PATRIC" id="fig|100226.15.peg.3200"/>
<dbReference type="eggNOG" id="COG0153">
    <property type="taxonomic scope" value="Bacteria"/>
</dbReference>
<dbReference type="HOGENOM" id="CLU_017814_2_1_11"/>
<dbReference type="InParanoid" id="Q9K3S8"/>
<dbReference type="OrthoDB" id="250531at2"/>
<dbReference type="PhylomeDB" id="Q9K3S8"/>
<dbReference type="BRENDA" id="2.7.1.6">
    <property type="organism ID" value="5998"/>
</dbReference>
<dbReference type="UniPathway" id="UPA00214"/>
<dbReference type="Proteomes" id="UP000001973">
    <property type="component" value="Chromosome"/>
</dbReference>
<dbReference type="GO" id="GO:0005829">
    <property type="term" value="C:cytosol"/>
    <property type="evidence" value="ECO:0000318"/>
    <property type="project" value="GO_Central"/>
</dbReference>
<dbReference type="GO" id="GO:0005524">
    <property type="term" value="F:ATP binding"/>
    <property type="evidence" value="ECO:0007669"/>
    <property type="project" value="UniProtKB-UniRule"/>
</dbReference>
<dbReference type="GO" id="GO:0004335">
    <property type="term" value="F:galactokinase activity"/>
    <property type="evidence" value="ECO:0000318"/>
    <property type="project" value="GO_Central"/>
</dbReference>
<dbReference type="GO" id="GO:0000287">
    <property type="term" value="F:magnesium ion binding"/>
    <property type="evidence" value="ECO:0007669"/>
    <property type="project" value="UniProtKB-UniRule"/>
</dbReference>
<dbReference type="GO" id="GO:0006012">
    <property type="term" value="P:galactose metabolic process"/>
    <property type="evidence" value="ECO:0000318"/>
    <property type="project" value="GO_Central"/>
</dbReference>
<dbReference type="FunFam" id="3.30.230.10:FF:000017">
    <property type="entry name" value="Galactokinase"/>
    <property type="match status" value="1"/>
</dbReference>
<dbReference type="FunFam" id="3.30.70.890:FF:000001">
    <property type="entry name" value="Galactokinase"/>
    <property type="match status" value="1"/>
</dbReference>
<dbReference type="Gene3D" id="3.30.230.10">
    <property type="match status" value="1"/>
</dbReference>
<dbReference type="Gene3D" id="3.30.70.890">
    <property type="entry name" value="GHMP kinase, C-terminal domain"/>
    <property type="match status" value="1"/>
</dbReference>
<dbReference type="HAMAP" id="MF_00246">
    <property type="entry name" value="Galactokinase"/>
    <property type="match status" value="1"/>
</dbReference>
<dbReference type="InterPro" id="IPR000705">
    <property type="entry name" value="Galactokinase"/>
</dbReference>
<dbReference type="InterPro" id="IPR022963">
    <property type="entry name" value="Galactokinase_bac"/>
</dbReference>
<dbReference type="InterPro" id="IPR019741">
    <property type="entry name" value="Galactokinase_CS"/>
</dbReference>
<dbReference type="InterPro" id="IPR019539">
    <property type="entry name" value="GalKase_N"/>
</dbReference>
<dbReference type="InterPro" id="IPR013750">
    <property type="entry name" value="GHMP_kinase_C_dom"/>
</dbReference>
<dbReference type="InterPro" id="IPR036554">
    <property type="entry name" value="GHMP_kinase_C_sf"/>
</dbReference>
<dbReference type="InterPro" id="IPR006204">
    <property type="entry name" value="GHMP_kinase_N_dom"/>
</dbReference>
<dbReference type="InterPro" id="IPR006203">
    <property type="entry name" value="GHMP_knse_ATP-bd_CS"/>
</dbReference>
<dbReference type="InterPro" id="IPR006206">
    <property type="entry name" value="Mevalonate/galactokinase"/>
</dbReference>
<dbReference type="InterPro" id="IPR020568">
    <property type="entry name" value="Ribosomal_Su5_D2-typ_SF"/>
</dbReference>
<dbReference type="InterPro" id="IPR014721">
    <property type="entry name" value="Ribsml_uS5_D2-typ_fold_subgr"/>
</dbReference>
<dbReference type="NCBIfam" id="TIGR00131">
    <property type="entry name" value="gal_kin"/>
    <property type="match status" value="1"/>
</dbReference>
<dbReference type="PANTHER" id="PTHR10457:SF7">
    <property type="entry name" value="GALACTOKINASE-RELATED"/>
    <property type="match status" value="1"/>
</dbReference>
<dbReference type="PANTHER" id="PTHR10457">
    <property type="entry name" value="MEVALONATE KINASE/GALACTOKINASE"/>
    <property type="match status" value="1"/>
</dbReference>
<dbReference type="Pfam" id="PF10509">
    <property type="entry name" value="GalKase_gal_bdg"/>
    <property type="match status" value="1"/>
</dbReference>
<dbReference type="Pfam" id="PF08544">
    <property type="entry name" value="GHMP_kinases_C"/>
    <property type="match status" value="1"/>
</dbReference>
<dbReference type="Pfam" id="PF00288">
    <property type="entry name" value="GHMP_kinases_N"/>
    <property type="match status" value="1"/>
</dbReference>
<dbReference type="PIRSF" id="PIRSF000530">
    <property type="entry name" value="Galactokinase"/>
    <property type="match status" value="1"/>
</dbReference>
<dbReference type="PRINTS" id="PR00473">
    <property type="entry name" value="GALCTOKINASE"/>
</dbReference>
<dbReference type="PRINTS" id="PR00959">
    <property type="entry name" value="MEVGALKINASE"/>
</dbReference>
<dbReference type="SUPFAM" id="SSF55060">
    <property type="entry name" value="GHMP Kinase, C-terminal domain"/>
    <property type="match status" value="1"/>
</dbReference>
<dbReference type="SUPFAM" id="SSF54211">
    <property type="entry name" value="Ribosomal protein S5 domain 2-like"/>
    <property type="match status" value="1"/>
</dbReference>
<dbReference type="PROSITE" id="PS00106">
    <property type="entry name" value="GALACTOKINASE"/>
    <property type="match status" value="1"/>
</dbReference>
<dbReference type="PROSITE" id="PS00627">
    <property type="entry name" value="GHMP_KINASES_ATP"/>
    <property type="match status" value="1"/>
</dbReference>
<accession>Q9K3S8</accession>
<gene>
    <name evidence="1" type="primary">galK</name>
    <name type="ordered locus">SCO3136</name>
    <name type="ORF">SCE66.15c</name>
</gene>
<organism>
    <name type="scientific">Streptomyces coelicolor (strain ATCC BAA-471 / A3(2) / M145)</name>
    <dbReference type="NCBI Taxonomy" id="100226"/>
    <lineage>
        <taxon>Bacteria</taxon>
        <taxon>Bacillati</taxon>
        <taxon>Actinomycetota</taxon>
        <taxon>Actinomycetes</taxon>
        <taxon>Kitasatosporales</taxon>
        <taxon>Streptomycetaceae</taxon>
        <taxon>Streptomyces</taxon>
        <taxon>Streptomyces albidoflavus group</taxon>
    </lineage>
</organism>
<protein>
    <recommendedName>
        <fullName evidence="1">Galactokinase</fullName>
        <ecNumber evidence="1">2.7.1.6</ecNumber>
    </recommendedName>
    <alternativeName>
        <fullName evidence="1">Galactose kinase</fullName>
    </alternativeName>
</protein>
<reference key="1">
    <citation type="journal article" date="2002" name="Nature">
        <title>Complete genome sequence of the model actinomycete Streptomyces coelicolor A3(2).</title>
        <authorList>
            <person name="Bentley S.D."/>
            <person name="Chater K.F."/>
            <person name="Cerdeno-Tarraga A.-M."/>
            <person name="Challis G.L."/>
            <person name="Thomson N.R."/>
            <person name="James K.D."/>
            <person name="Harris D.E."/>
            <person name="Quail M.A."/>
            <person name="Kieser H."/>
            <person name="Harper D."/>
            <person name="Bateman A."/>
            <person name="Brown S."/>
            <person name="Chandra G."/>
            <person name="Chen C.W."/>
            <person name="Collins M."/>
            <person name="Cronin A."/>
            <person name="Fraser A."/>
            <person name="Goble A."/>
            <person name="Hidalgo J."/>
            <person name="Hornsby T."/>
            <person name="Howarth S."/>
            <person name="Huang C.-H."/>
            <person name="Kieser T."/>
            <person name="Larke L."/>
            <person name="Murphy L.D."/>
            <person name="Oliver K."/>
            <person name="O'Neil S."/>
            <person name="Rabbinowitsch E."/>
            <person name="Rajandream M.A."/>
            <person name="Rutherford K.M."/>
            <person name="Rutter S."/>
            <person name="Seeger K."/>
            <person name="Saunders D."/>
            <person name="Sharp S."/>
            <person name="Squares R."/>
            <person name="Squares S."/>
            <person name="Taylor K."/>
            <person name="Warren T."/>
            <person name="Wietzorrek A."/>
            <person name="Woodward J.R."/>
            <person name="Barrell B.G."/>
            <person name="Parkhill J."/>
            <person name="Hopwood D.A."/>
        </authorList>
    </citation>
    <scope>NUCLEOTIDE SEQUENCE [LARGE SCALE GENOMIC DNA]</scope>
    <source>
        <strain>ATCC BAA-471 / A3(2) / M145</strain>
    </source>
</reference>
<evidence type="ECO:0000255" key="1">
    <source>
        <dbReference type="HAMAP-Rule" id="MF_00246"/>
    </source>
</evidence>
<name>GAL1_STRCO</name>
<comment type="function">
    <text evidence="1">Catalyzes the transfer of the gamma-phosphate of ATP to D-galactose to form alpha-D-galactose-1-phosphate (Gal-1-P).</text>
</comment>
<comment type="catalytic activity">
    <reaction evidence="1">
        <text>alpha-D-galactose + ATP = alpha-D-galactose 1-phosphate + ADP + H(+)</text>
        <dbReference type="Rhea" id="RHEA:13553"/>
        <dbReference type="ChEBI" id="CHEBI:15378"/>
        <dbReference type="ChEBI" id="CHEBI:28061"/>
        <dbReference type="ChEBI" id="CHEBI:30616"/>
        <dbReference type="ChEBI" id="CHEBI:58336"/>
        <dbReference type="ChEBI" id="CHEBI:456216"/>
        <dbReference type="EC" id="2.7.1.6"/>
    </reaction>
</comment>
<comment type="pathway">
    <text evidence="1">Carbohydrate metabolism; galactose metabolism.</text>
</comment>
<comment type="subcellular location">
    <subcellularLocation>
        <location evidence="1">Cytoplasm</location>
    </subcellularLocation>
</comment>
<comment type="similarity">
    <text evidence="1">Belongs to the GHMP kinase family. GalK subfamily.</text>
</comment>
<keyword id="KW-0067">ATP-binding</keyword>
<keyword id="KW-0119">Carbohydrate metabolism</keyword>
<keyword id="KW-0963">Cytoplasm</keyword>
<keyword id="KW-0299">Galactose metabolism</keyword>
<keyword id="KW-0418">Kinase</keyword>
<keyword id="KW-0460">Magnesium</keyword>
<keyword id="KW-0479">Metal-binding</keyword>
<keyword id="KW-0547">Nucleotide-binding</keyword>
<keyword id="KW-1185">Reference proteome</keyword>
<keyword id="KW-0808">Transferase</keyword>
<proteinExistence type="inferred from homology"/>
<sequence>MGEAVAGTVGERFRELYGAEPEGVWAAPGRVNLIGEHTDYNDGFVMPFALPHQAVAAVSRRDDGILRLHSADIDADPVELRVADLAPGSDKSWTAYPSGVLWALREAGHELTGADVHLASTVPSGAGLSSSAALEVVLALAMNDLYALGLRGWQLARLCQRAENVYVGAPVGIMDQTASACCEAGHALFLDTRDLSQRQIPFDLAAEGMRLLVVDTRVKHSHSEGEYGKRRAGCEKGAALLGVDALRDVPYADLDAALERLGDEEEVRRLVRHVVTEDERVERVVALLESGDTRAIGAVLVEGHASLRDDFRISCPELDLVVDTALASGALGARMTGGGFGGSAIVLVEAAGVDAVTKAVEDAFAAAGLKAPRVFEAVPSAGARRLV</sequence>
<feature type="chain" id="PRO_0000184625" description="Galactokinase">
    <location>
        <begin position="1"/>
        <end position="387"/>
    </location>
</feature>
<feature type="active site" description="Proton acceptor" evidence="1">
    <location>
        <position position="175"/>
    </location>
</feature>
<feature type="binding site" evidence="1">
    <location>
        <begin position="36"/>
        <end position="39"/>
    </location>
    <ligand>
        <name>substrate</name>
    </ligand>
</feature>
<feature type="binding site" evidence="1">
    <location>
        <position position="70"/>
    </location>
    <ligand>
        <name>ATP</name>
        <dbReference type="ChEBI" id="CHEBI:30616"/>
    </ligand>
</feature>
<feature type="binding site" evidence="1">
    <location>
        <begin position="125"/>
        <end position="131"/>
    </location>
    <ligand>
        <name>ATP</name>
        <dbReference type="ChEBI" id="CHEBI:30616"/>
    </ligand>
</feature>
<feature type="binding site" evidence="1">
    <location>
        <position position="131"/>
    </location>
    <ligand>
        <name>Mg(2+)</name>
        <dbReference type="ChEBI" id="CHEBI:18420"/>
    </ligand>
</feature>
<feature type="binding site" evidence="1">
    <location>
        <position position="163"/>
    </location>
    <ligand>
        <name>Mg(2+)</name>
        <dbReference type="ChEBI" id="CHEBI:18420"/>
    </ligand>
</feature>
<feature type="binding site" evidence="1">
    <location>
        <position position="227"/>
    </location>
    <ligand>
        <name>substrate</name>
    </ligand>
</feature>
<feature type="site" description="Transition state stabilizer" evidence="1">
    <location>
        <position position="30"/>
    </location>
</feature>